<keyword id="KW-0963">Cytoplasm</keyword>
<keyword id="KW-0342">GTP-binding</keyword>
<keyword id="KW-0436">Ligase</keyword>
<keyword id="KW-0460">Magnesium</keyword>
<keyword id="KW-0479">Metal-binding</keyword>
<keyword id="KW-0547">Nucleotide-binding</keyword>
<keyword id="KW-0658">Purine biosynthesis</keyword>
<keyword id="KW-1185">Reference proteome</keyword>
<feature type="chain" id="PRO_0000398893" description="Adenylosuccinate synthetase isozyme 1">
    <location>
        <begin position="1"/>
        <end position="452"/>
    </location>
</feature>
<feature type="region of interest" description="Disordered" evidence="3">
    <location>
        <begin position="1"/>
        <end position="22"/>
    </location>
</feature>
<feature type="active site" description="Proton acceptor" evidence="2">
    <location>
        <position position="38"/>
    </location>
</feature>
<feature type="active site" description="Proton donor" evidence="2">
    <location>
        <position position="66"/>
    </location>
</feature>
<feature type="binding site" evidence="2">
    <location>
        <begin position="37"/>
        <end position="43"/>
    </location>
    <ligand>
        <name>GTP</name>
        <dbReference type="ChEBI" id="CHEBI:37565"/>
    </ligand>
</feature>
<feature type="binding site" description="in other chain" evidence="2">
    <location>
        <begin position="38"/>
        <end position="41"/>
    </location>
    <ligand>
        <name>IMP</name>
        <dbReference type="ChEBI" id="CHEBI:58053"/>
        <note>ligand shared between dimeric partners</note>
    </ligand>
</feature>
<feature type="binding site" evidence="2">
    <location>
        <position position="38"/>
    </location>
    <ligand>
        <name>Mg(2+)</name>
        <dbReference type="ChEBI" id="CHEBI:18420"/>
    </ligand>
</feature>
<feature type="binding site" evidence="2">
    <location>
        <position position="38"/>
    </location>
    <ligand>
        <name>substrate</name>
    </ligand>
</feature>
<feature type="binding site" description="in other chain" evidence="2">
    <location>
        <begin position="63"/>
        <end position="66"/>
    </location>
    <ligand>
        <name>IMP</name>
        <dbReference type="ChEBI" id="CHEBI:58053"/>
        <note>ligand shared between dimeric partners</note>
    </ligand>
</feature>
<feature type="binding site" evidence="2">
    <location>
        <begin position="65"/>
        <end position="67"/>
    </location>
    <ligand>
        <name>GTP</name>
        <dbReference type="ChEBI" id="CHEBI:37565"/>
    </ligand>
</feature>
<feature type="binding site" evidence="2">
    <location>
        <position position="65"/>
    </location>
    <ligand>
        <name>Mg(2+)</name>
        <dbReference type="ChEBI" id="CHEBI:18420"/>
    </ligand>
</feature>
<feature type="binding site" description="in other chain" evidence="2">
    <location>
        <position position="158"/>
    </location>
    <ligand>
        <name>IMP</name>
        <dbReference type="ChEBI" id="CHEBI:58053"/>
        <note>ligand shared between dimeric partners</note>
    </ligand>
</feature>
<feature type="binding site" evidence="2">
    <location>
        <position position="172"/>
    </location>
    <ligand>
        <name>IMP</name>
        <dbReference type="ChEBI" id="CHEBI:58053"/>
        <note>ligand shared between dimeric partners</note>
    </ligand>
</feature>
<feature type="binding site" description="in other chain" evidence="2">
    <location>
        <position position="251"/>
    </location>
    <ligand>
        <name>IMP</name>
        <dbReference type="ChEBI" id="CHEBI:58053"/>
        <note>ligand shared between dimeric partners</note>
    </ligand>
</feature>
<feature type="binding site" description="in other chain" evidence="2">
    <location>
        <position position="266"/>
    </location>
    <ligand>
        <name>IMP</name>
        <dbReference type="ChEBI" id="CHEBI:58053"/>
        <note>ligand shared between dimeric partners</note>
    </ligand>
</feature>
<feature type="binding site" evidence="2">
    <location>
        <begin position="326"/>
        <end position="332"/>
    </location>
    <ligand>
        <name>substrate</name>
    </ligand>
</feature>
<feature type="binding site" description="in other chain" evidence="2">
    <location>
        <position position="330"/>
    </location>
    <ligand>
        <name>IMP</name>
        <dbReference type="ChEBI" id="CHEBI:58053"/>
        <note>ligand shared between dimeric partners</note>
    </ligand>
</feature>
<feature type="binding site" evidence="2">
    <location>
        <position position="332"/>
    </location>
    <ligand>
        <name>GTP</name>
        <dbReference type="ChEBI" id="CHEBI:37565"/>
    </ligand>
</feature>
<feature type="binding site" evidence="2">
    <location>
        <begin position="358"/>
        <end position="360"/>
    </location>
    <ligand>
        <name>GTP</name>
        <dbReference type="ChEBI" id="CHEBI:37565"/>
    </ligand>
</feature>
<feature type="binding site" evidence="2">
    <location>
        <begin position="440"/>
        <end position="443"/>
    </location>
    <ligand>
        <name>GTP</name>
        <dbReference type="ChEBI" id="CHEBI:37565"/>
    </ligand>
</feature>
<comment type="function">
    <text evidence="1">Component of the purine nucleotide cycle (PNC), which interconverts IMP and AMP to regulate the nucleotide levels in various tissues, and which contributes to glycolysis and ammoniagenesis. Catalyzes the first committed step in the biosynthesis of AMP from IMP.</text>
</comment>
<comment type="catalytic activity">
    <reaction evidence="2">
        <text>IMP + L-aspartate + GTP = N(6)-(1,2-dicarboxyethyl)-AMP + GDP + phosphate + 2 H(+)</text>
        <dbReference type="Rhea" id="RHEA:15753"/>
        <dbReference type="ChEBI" id="CHEBI:15378"/>
        <dbReference type="ChEBI" id="CHEBI:29991"/>
        <dbReference type="ChEBI" id="CHEBI:37565"/>
        <dbReference type="ChEBI" id="CHEBI:43474"/>
        <dbReference type="ChEBI" id="CHEBI:57567"/>
        <dbReference type="ChEBI" id="CHEBI:58053"/>
        <dbReference type="ChEBI" id="CHEBI:58189"/>
        <dbReference type="EC" id="6.3.4.4"/>
    </reaction>
</comment>
<comment type="cofactor">
    <cofactor evidence="2">
        <name>Mg(2+)</name>
        <dbReference type="ChEBI" id="CHEBI:18420"/>
    </cofactor>
    <text evidence="2">Binds 1 Mg(2+) ion per subunit.</text>
</comment>
<comment type="pathway">
    <text evidence="2">Purine metabolism; AMP biosynthesis via de novo pathway; AMP from IMP: step 1/2.</text>
</comment>
<comment type="subunit">
    <text evidence="2">Homodimer.</text>
</comment>
<comment type="subcellular location">
    <subcellularLocation>
        <location evidence="2">Cytoplasm</location>
    </subcellularLocation>
</comment>
<comment type="similarity">
    <text evidence="2">Belongs to the adenylosuccinate synthetase family.</text>
</comment>
<proteinExistence type="evidence at transcript level"/>
<evidence type="ECO:0000250" key="1">
    <source>
        <dbReference type="UniProtKB" id="Q8N142"/>
    </source>
</evidence>
<evidence type="ECO:0000255" key="2">
    <source>
        <dbReference type="HAMAP-Rule" id="MF_03126"/>
    </source>
</evidence>
<evidence type="ECO:0000256" key="3">
    <source>
        <dbReference type="SAM" id="MobiDB-lite"/>
    </source>
</evidence>
<protein>
    <recommendedName>
        <fullName evidence="2">Adenylosuccinate synthetase isozyme 1</fullName>
        <shortName evidence="2">AMPSase 1</shortName>
        <shortName evidence="2">AdSS 1</shortName>
        <ecNumber evidence="2">6.3.4.4</ecNumber>
    </recommendedName>
    <alternativeName>
        <fullName evidence="2">Adenylosuccinate synthetase, basic isozyme</fullName>
    </alternativeName>
    <alternativeName>
        <fullName evidence="2">Adenylosuccinate synthetase, muscle isozyme</fullName>
        <shortName evidence="2">M-type adenylosuccinate synthetase</shortName>
    </alternativeName>
    <alternativeName>
        <fullName evidence="2">IMP--aspartate ligase 1</fullName>
    </alternativeName>
</protein>
<name>PURA1_XENTR</name>
<organism>
    <name type="scientific">Xenopus tropicalis</name>
    <name type="common">Western clawed frog</name>
    <name type="synonym">Silurana tropicalis</name>
    <dbReference type="NCBI Taxonomy" id="8364"/>
    <lineage>
        <taxon>Eukaryota</taxon>
        <taxon>Metazoa</taxon>
        <taxon>Chordata</taxon>
        <taxon>Craniata</taxon>
        <taxon>Vertebrata</taxon>
        <taxon>Euteleostomi</taxon>
        <taxon>Amphibia</taxon>
        <taxon>Batrachia</taxon>
        <taxon>Anura</taxon>
        <taxon>Pipoidea</taxon>
        <taxon>Pipidae</taxon>
        <taxon>Xenopodinae</taxon>
        <taxon>Xenopus</taxon>
        <taxon>Silurana</taxon>
    </lineage>
</organism>
<accession>Q6DIW6</accession>
<gene>
    <name type="primary">adss1</name>
    <name type="synonym">adssl1</name>
    <name type="ORF">TTpA011j02.1</name>
</gene>
<sequence length="452" mass="50153">MSGTRASNDRSSHPGGHKRPRYDVGNKVTVVLGAQWGDEGKGKVVDLLATDSDIICRCQGGNNAGHTVVVEGKEYDFHLFPSGIINPKAISFIGNGVVIHLPGLFEEADKNEKKGLKDWEKRLIISDRAHIVCDFHQAVDGLQEVQRQAQEGKNIGTTKKGIGPTYSSKASRTGLRICDLLSDFDEFSARFKNLAHQHQSMFSNLEVDIDGQLKKLKMYAEKIRPMVRDGVYFMYEALHGSPKKILVEGANAALLDIDFGTYPFVTSSNCTVGGVCTGLGIPPQNIGDVYGVVKTYSTRVGIGAFPTEQINEIGNLLQTRGHEWGVTTGRKRRCGWLDLVILRYAHMINGFTALALTKLDILDVLDEIKVGVAYRLNGKRIPYFPANQEILQKVEVEYEAMPGWKCDTTGARKWEDLPTRAQNYIRFVENHIGVPVKWVGVGKSRESMIELF</sequence>
<reference key="1">
    <citation type="submission" date="2004-06" db="EMBL/GenBank/DDBJ databases">
        <authorList>
            <consortium name="NIH - Xenopus Gene Collection (XGC) project"/>
        </authorList>
    </citation>
    <scope>NUCLEOTIDE SEQUENCE [LARGE SCALE MRNA]</scope>
</reference>
<reference key="2">
    <citation type="submission" date="2006-10" db="EMBL/GenBank/DDBJ databases">
        <authorList>
            <consortium name="Sanger Xenopus tropicalis EST/cDNA project"/>
        </authorList>
    </citation>
    <scope>NUCLEOTIDE SEQUENCE [LARGE SCALE MRNA]</scope>
    <source>
        <tissue>Tadpole</tissue>
    </source>
</reference>
<dbReference type="EC" id="6.3.4.4" evidence="2"/>
<dbReference type="EMBL" id="BC075419">
    <property type="protein sequence ID" value="AAH75419.1"/>
    <property type="molecule type" value="mRNA"/>
</dbReference>
<dbReference type="EMBL" id="CR848252">
    <property type="protein sequence ID" value="CAJ83150.1"/>
    <property type="molecule type" value="mRNA"/>
</dbReference>
<dbReference type="RefSeq" id="NP_001004939.1">
    <property type="nucleotide sequence ID" value="NM_001004939.1"/>
</dbReference>
<dbReference type="SMR" id="Q6DIW6"/>
<dbReference type="FunCoup" id="Q6DIW6">
    <property type="interactions" value="831"/>
</dbReference>
<dbReference type="STRING" id="8364.ENSXETP00000022487"/>
<dbReference type="PaxDb" id="8364-ENSXETP00000053180"/>
<dbReference type="DNASU" id="448339"/>
<dbReference type="GeneID" id="448339"/>
<dbReference type="KEGG" id="xtr:448339"/>
<dbReference type="AGR" id="Xenbase:XB-GENE-5758191"/>
<dbReference type="CTD" id="122622"/>
<dbReference type="Xenbase" id="XB-GENE-5758191">
    <property type="gene designation" value="adss1"/>
</dbReference>
<dbReference type="eggNOG" id="KOG1355">
    <property type="taxonomic scope" value="Eukaryota"/>
</dbReference>
<dbReference type="HOGENOM" id="CLU_029848_3_0_1"/>
<dbReference type="InParanoid" id="Q6DIW6"/>
<dbReference type="OMA" id="TKAYSSC"/>
<dbReference type="OrthoDB" id="10265645at2759"/>
<dbReference type="PhylomeDB" id="Q6DIW6"/>
<dbReference type="TreeFam" id="TF300486"/>
<dbReference type="Reactome" id="R-XTR-73817">
    <property type="pathway name" value="Purine ribonucleoside monophosphate biosynthesis"/>
</dbReference>
<dbReference type="UniPathway" id="UPA00075">
    <property type="reaction ID" value="UER00335"/>
</dbReference>
<dbReference type="Proteomes" id="UP000008143">
    <property type="component" value="Chromosome 8"/>
</dbReference>
<dbReference type="Bgee" id="ENSXETG00000024695">
    <property type="expression patterns" value="Expressed in skeletal muscle tissue and 12 other cell types or tissues"/>
</dbReference>
<dbReference type="GO" id="GO:0005737">
    <property type="term" value="C:cytoplasm"/>
    <property type="evidence" value="ECO:0007669"/>
    <property type="project" value="UniProtKB-SubCell"/>
</dbReference>
<dbReference type="GO" id="GO:0004019">
    <property type="term" value="F:adenylosuccinate synthase activity"/>
    <property type="evidence" value="ECO:0000250"/>
    <property type="project" value="UniProtKB"/>
</dbReference>
<dbReference type="GO" id="GO:0005525">
    <property type="term" value="F:GTP binding"/>
    <property type="evidence" value="ECO:0007669"/>
    <property type="project" value="UniProtKB-UniRule"/>
</dbReference>
<dbReference type="GO" id="GO:0000287">
    <property type="term" value="F:magnesium ion binding"/>
    <property type="evidence" value="ECO:0007669"/>
    <property type="project" value="UniProtKB-UniRule"/>
</dbReference>
<dbReference type="GO" id="GO:0044208">
    <property type="term" value="P:'de novo' AMP biosynthetic process"/>
    <property type="evidence" value="ECO:0007669"/>
    <property type="project" value="UniProtKB-UniRule"/>
</dbReference>
<dbReference type="CDD" id="cd03108">
    <property type="entry name" value="AdSS"/>
    <property type="match status" value="1"/>
</dbReference>
<dbReference type="FunFam" id="3.90.170.10:FF:000001">
    <property type="entry name" value="Adenylosuccinate synthetase"/>
    <property type="match status" value="1"/>
</dbReference>
<dbReference type="FunFam" id="1.10.300.10:FF:000002">
    <property type="entry name" value="Adenylosuccinate synthetase, chloroplastic"/>
    <property type="match status" value="1"/>
</dbReference>
<dbReference type="Gene3D" id="3.40.440.10">
    <property type="entry name" value="Adenylosuccinate Synthetase, subunit A, domain 1"/>
    <property type="match status" value="1"/>
</dbReference>
<dbReference type="Gene3D" id="1.10.300.10">
    <property type="entry name" value="Adenylosuccinate Synthetase, subunit A, domain 2"/>
    <property type="match status" value="1"/>
</dbReference>
<dbReference type="Gene3D" id="3.90.170.10">
    <property type="entry name" value="Adenylosuccinate Synthetase, subunit A, domain 3"/>
    <property type="match status" value="1"/>
</dbReference>
<dbReference type="HAMAP" id="MF_00011">
    <property type="entry name" value="Adenylosucc_synth"/>
    <property type="match status" value="1"/>
</dbReference>
<dbReference type="HAMAP" id="MF_03126">
    <property type="entry name" value="Adenylosucc_synth_vert_basic"/>
    <property type="match status" value="1"/>
</dbReference>
<dbReference type="InterPro" id="IPR018220">
    <property type="entry name" value="Adenylosuccin_syn_GTP-bd"/>
</dbReference>
<dbReference type="InterPro" id="IPR033128">
    <property type="entry name" value="Adenylosuccin_syn_Lys_AS"/>
</dbReference>
<dbReference type="InterPro" id="IPR042109">
    <property type="entry name" value="Adenylosuccinate_synth_dom1"/>
</dbReference>
<dbReference type="InterPro" id="IPR042110">
    <property type="entry name" value="Adenylosuccinate_synth_dom2"/>
</dbReference>
<dbReference type="InterPro" id="IPR042111">
    <property type="entry name" value="Adenylosuccinate_synth_dom3"/>
</dbReference>
<dbReference type="InterPro" id="IPR001114">
    <property type="entry name" value="Adenylosuccinate_synthetase"/>
</dbReference>
<dbReference type="InterPro" id="IPR027509">
    <property type="entry name" value="AdSS_1_vert"/>
</dbReference>
<dbReference type="InterPro" id="IPR027417">
    <property type="entry name" value="P-loop_NTPase"/>
</dbReference>
<dbReference type="NCBIfam" id="NF002223">
    <property type="entry name" value="PRK01117.1"/>
    <property type="match status" value="1"/>
</dbReference>
<dbReference type="NCBIfam" id="TIGR00184">
    <property type="entry name" value="purA"/>
    <property type="match status" value="1"/>
</dbReference>
<dbReference type="PANTHER" id="PTHR11846">
    <property type="entry name" value="ADENYLOSUCCINATE SYNTHETASE"/>
    <property type="match status" value="1"/>
</dbReference>
<dbReference type="PANTHER" id="PTHR11846:SF2">
    <property type="entry name" value="ADENYLOSUCCINATE SYNTHETASE ISOZYME 1"/>
    <property type="match status" value="1"/>
</dbReference>
<dbReference type="Pfam" id="PF00709">
    <property type="entry name" value="Adenylsucc_synt"/>
    <property type="match status" value="1"/>
</dbReference>
<dbReference type="SMART" id="SM00788">
    <property type="entry name" value="Adenylsucc_synt"/>
    <property type="match status" value="1"/>
</dbReference>
<dbReference type="SUPFAM" id="SSF52540">
    <property type="entry name" value="P-loop containing nucleoside triphosphate hydrolases"/>
    <property type="match status" value="1"/>
</dbReference>
<dbReference type="PROSITE" id="PS01266">
    <property type="entry name" value="ADENYLOSUCCIN_SYN_1"/>
    <property type="match status" value="1"/>
</dbReference>
<dbReference type="PROSITE" id="PS00513">
    <property type="entry name" value="ADENYLOSUCCIN_SYN_2"/>
    <property type="match status" value="1"/>
</dbReference>